<proteinExistence type="inferred from homology"/>
<feature type="chain" id="PRO_0000357176" description="Methylthioribose-1-phosphate isomerase">
    <location>
        <begin position="1"/>
        <end position="348"/>
    </location>
</feature>
<feature type="active site" description="Proton donor" evidence="1">
    <location>
        <position position="235"/>
    </location>
</feature>
<feature type="binding site" evidence="1">
    <location>
        <begin position="46"/>
        <end position="48"/>
    </location>
    <ligand>
        <name>substrate</name>
    </ligand>
</feature>
<feature type="binding site" evidence="1">
    <location>
        <position position="88"/>
    </location>
    <ligand>
        <name>substrate</name>
    </ligand>
</feature>
<feature type="binding site" evidence="1">
    <location>
        <position position="194"/>
    </location>
    <ligand>
        <name>substrate</name>
    </ligand>
</feature>
<feature type="binding site" evidence="1">
    <location>
        <begin position="245"/>
        <end position="246"/>
    </location>
    <ligand>
        <name>substrate</name>
    </ligand>
</feature>
<feature type="site" description="Transition state stabilizer" evidence="1">
    <location>
        <position position="155"/>
    </location>
</feature>
<dbReference type="EC" id="5.3.1.23" evidence="1"/>
<dbReference type="EMBL" id="CP000860">
    <property type="protein sequence ID" value="ACA59182.1"/>
    <property type="molecule type" value="Genomic_DNA"/>
</dbReference>
<dbReference type="RefSeq" id="WP_012301770.1">
    <property type="nucleotide sequence ID" value="NC_010424.1"/>
</dbReference>
<dbReference type="SMR" id="B1I2P1"/>
<dbReference type="STRING" id="477974.Daud_0648"/>
<dbReference type="KEGG" id="dau:Daud_0648"/>
<dbReference type="eggNOG" id="COG0182">
    <property type="taxonomic scope" value="Bacteria"/>
</dbReference>
<dbReference type="HOGENOM" id="CLU_016218_1_2_9"/>
<dbReference type="OrthoDB" id="9803436at2"/>
<dbReference type="UniPathway" id="UPA00904">
    <property type="reaction ID" value="UER00874"/>
</dbReference>
<dbReference type="Proteomes" id="UP000008544">
    <property type="component" value="Chromosome"/>
</dbReference>
<dbReference type="GO" id="GO:0046523">
    <property type="term" value="F:S-methyl-5-thioribose-1-phosphate isomerase activity"/>
    <property type="evidence" value="ECO:0007669"/>
    <property type="project" value="UniProtKB-UniRule"/>
</dbReference>
<dbReference type="GO" id="GO:0019509">
    <property type="term" value="P:L-methionine salvage from methylthioadenosine"/>
    <property type="evidence" value="ECO:0007669"/>
    <property type="project" value="UniProtKB-UniRule"/>
</dbReference>
<dbReference type="FunFam" id="1.20.120.420:FF:000003">
    <property type="entry name" value="Methylthioribose-1-phosphate isomerase"/>
    <property type="match status" value="1"/>
</dbReference>
<dbReference type="FunFam" id="3.40.50.10470:FF:000006">
    <property type="entry name" value="Methylthioribose-1-phosphate isomerase"/>
    <property type="match status" value="1"/>
</dbReference>
<dbReference type="Gene3D" id="1.20.120.420">
    <property type="entry name" value="translation initiation factor eif-2b, domain 1"/>
    <property type="match status" value="1"/>
</dbReference>
<dbReference type="Gene3D" id="3.40.50.10470">
    <property type="entry name" value="Translation initiation factor eif-2b, domain 2"/>
    <property type="match status" value="1"/>
</dbReference>
<dbReference type="HAMAP" id="MF_01678">
    <property type="entry name" value="Salvage_MtnA"/>
    <property type="match status" value="1"/>
</dbReference>
<dbReference type="InterPro" id="IPR000649">
    <property type="entry name" value="IF-2B-related"/>
</dbReference>
<dbReference type="InterPro" id="IPR005251">
    <property type="entry name" value="IF-M1Pi"/>
</dbReference>
<dbReference type="InterPro" id="IPR042529">
    <property type="entry name" value="IF_2B-like_C"/>
</dbReference>
<dbReference type="InterPro" id="IPR011559">
    <property type="entry name" value="Initiation_fac_2B_a/b/d"/>
</dbReference>
<dbReference type="InterPro" id="IPR027363">
    <property type="entry name" value="M1Pi_N"/>
</dbReference>
<dbReference type="InterPro" id="IPR037171">
    <property type="entry name" value="NagB/RpiA_transferase-like"/>
</dbReference>
<dbReference type="NCBIfam" id="TIGR00524">
    <property type="entry name" value="eIF-2B_rel"/>
    <property type="match status" value="1"/>
</dbReference>
<dbReference type="NCBIfam" id="NF004326">
    <property type="entry name" value="PRK05720.1"/>
    <property type="match status" value="1"/>
</dbReference>
<dbReference type="NCBIfam" id="TIGR00512">
    <property type="entry name" value="salvage_mtnA"/>
    <property type="match status" value="1"/>
</dbReference>
<dbReference type="PANTHER" id="PTHR43475">
    <property type="entry name" value="METHYLTHIORIBOSE-1-PHOSPHATE ISOMERASE"/>
    <property type="match status" value="1"/>
</dbReference>
<dbReference type="PANTHER" id="PTHR43475:SF1">
    <property type="entry name" value="METHYLTHIORIBOSE-1-PHOSPHATE ISOMERASE"/>
    <property type="match status" value="1"/>
</dbReference>
<dbReference type="Pfam" id="PF01008">
    <property type="entry name" value="IF-2B"/>
    <property type="match status" value="1"/>
</dbReference>
<dbReference type="SUPFAM" id="SSF100950">
    <property type="entry name" value="NagB/RpiA/CoA transferase-like"/>
    <property type="match status" value="1"/>
</dbReference>
<protein>
    <recommendedName>
        <fullName evidence="1">Methylthioribose-1-phosphate isomerase</fullName>
        <shortName evidence="1">M1Pi</shortName>
        <shortName evidence="1">MTR-1-P isomerase</shortName>
        <ecNumber evidence="1">5.3.1.23</ecNumber>
    </recommendedName>
    <alternativeName>
        <fullName evidence="1">S-methyl-5-thioribose-1-phosphate isomerase</fullName>
    </alternativeName>
</protein>
<organism>
    <name type="scientific">Desulforudis audaxviator (strain MP104C)</name>
    <dbReference type="NCBI Taxonomy" id="477974"/>
    <lineage>
        <taxon>Bacteria</taxon>
        <taxon>Bacillati</taxon>
        <taxon>Bacillota</taxon>
        <taxon>Clostridia</taxon>
        <taxon>Thermoanaerobacterales</taxon>
        <taxon>Candidatus Desulforudaceae</taxon>
        <taxon>Candidatus Desulforudis</taxon>
    </lineage>
</organism>
<comment type="function">
    <text evidence="1">Catalyzes the interconversion of methylthioribose-1-phosphate (MTR-1-P) into methylthioribulose-1-phosphate (MTRu-1-P).</text>
</comment>
<comment type="catalytic activity">
    <reaction evidence="1">
        <text>5-(methylsulfanyl)-alpha-D-ribose 1-phosphate = 5-(methylsulfanyl)-D-ribulose 1-phosphate</text>
        <dbReference type="Rhea" id="RHEA:19989"/>
        <dbReference type="ChEBI" id="CHEBI:58533"/>
        <dbReference type="ChEBI" id="CHEBI:58548"/>
        <dbReference type="EC" id="5.3.1.23"/>
    </reaction>
</comment>
<comment type="pathway">
    <text evidence="1">Amino-acid biosynthesis; L-methionine biosynthesis via salvage pathway; L-methionine from S-methyl-5-thio-alpha-D-ribose 1-phosphate: step 1/6.</text>
</comment>
<comment type="similarity">
    <text evidence="2">Belongs to the eIF-2B alpha/beta/delta subunits family. MtnA subfamily.</text>
</comment>
<sequence length="348" mass="37458">MPVEALYWKDGRLYVLDQTRLPEETVYVTCSSYRDAAEAIKTMRVRGAPAIGAVGAFGLVLGALETGGDRESFLARLREIAGVLRDTRPTAVNLDWALERMLARAVETLGEPGALRAALLAEAQAIVREDIEANRRMGLFGRELIPDPARILTHCNAGALATAGYGTALGVIRAAREAGKQVKVFAGETRPFLQGARLTAWELMREGIEVVLVADNMAGYLMAREGLDLVIVGADRVAANGDVANKIGTYSLAVLARAHGIPFYVAVPLSTVDLRTAIGRDIPIEERDPAELTHFRGRRVAPQGVAVWNPAFDVTPNELITALITDAGVLKPPFGEALRRAVGSGRRE</sequence>
<name>MTNA_DESAP</name>
<keyword id="KW-0028">Amino-acid biosynthesis</keyword>
<keyword id="KW-0413">Isomerase</keyword>
<keyword id="KW-0486">Methionine biosynthesis</keyword>
<keyword id="KW-1185">Reference proteome</keyword>
<evidence type="ECO:0000255" key="1">
    <source>
        <dbReference type="HAMAP-Rule" id="MF_01678"/>
    </source>
</evidence>
<evidence type="ECO:0000305" key="2"/>
<gene>
    <name evidence="1" type="primary">mtnA</name>
    <name type="ordered locus">Daud_0648</name>
</gene>
<reference key="1">
    <citation type="submission" date="2007-10" db="EMBL/GenBank/DDBJ databases">
        <title>Complete sequence of chromosome of Desulforudis audaxviator MP104C.</title>
        <authorList>
            <person name="Copeland A."/>
            <person name="Lucas S."/>
            <person name="Lapidus A."/>
            <person name="Barry K."/>
            <person name="Glavina del Rio T."/>
            <person name="Dalin E."/>
            <person name="Tice H."/>
            <person name="Bruce D."/>
            <person name="Pitluck S."/>
            <person name="Lowry S.R."/>
            <person name="Larimer F."/>
            <person name="Land M.L."/>
            <person name="Hauser L."/>
            <person name="Kyrpides N."/>
            <person name="Ivanova N.N."/>
            <person name="Richardson P."/>
        </authorList>
    </citation>
    <scope>NUCLEOTIDE SEQUENCE [LARGE SCALE GENOMIC DNA]</scope>
    <source>
        <strain>MP104C</strain>
    </source>
</reference>
<accession>B1I2P1</accession>